<name>IKKB_BOVIN</name>
<organism>
    <name type="scientific">Bos taurus</name>
    <name type="common">Bovine</name>
    <dbReference type="NCBI Taxonomy" id="9913"/>
    <lineage>
        <taxon>Eukaryota</taxon>
        <taxon>Metazoa</taxon>
        <taxon>Chordata</taxon>
        <taxon>Craniata</taxon>
        <taxon>Vertebrata</taxon>
        <taxon>Euteleostomi</taxon>
        <taxon>Mammalia</taxon>
        <taxon>Eutheria</taxon>
        <taxon>Laurasiatheria</taxon>
        <taxon>Artiodactyla</taxon>
        <taxon>Ruminantia</taxon>
        <taxon>Pecora</taxon>
        <taxon>Bovidae</taxon>
        <taxon>Bovinae</taxon>
        <taxon>Bos</taxon>
    </lineage>
</organism>
<accession>Q95KV0</accession>
<sequence length="756" mass="86647">MSWSPSLPTQTCGAWEMKERLGTGGFGNVIRWHNQETGEQIAIKQCRQELSPRNRERWCLEIQIMRRLNHPNVVAARDVPEGMQSLAPNDLPLLAMEYCQGGDLRKYLNQFENCCGLREGAILTLLSDIASALRYLHENRIIHRDLKPENIVLQQGEQRLIHKIIDLGYAKELDQGSLCTSFVGTLQYLAPELLEQQKYTVTVDYWSFGTLAFECITGFRPFLPNWQPVQWHSKVRQKSEMDIVVSEDLNGAVKFSSSLPHPNNLNSVLAQRLEKWLQLMLMWHPRQRGTDPVYGPNGCFKALDDILNLKLLHVLNMVTGTLHTYPVTEDESLQSLKARIRQDTGILEEDQELLQEAGLALIPDKPAAQCLSDGKLNEGRTLDMDLVFLFDNSRVTYESQVSPQPQPESVSCILQEPKRNLPFFQLRKVWGQVWHSIQALKEDCSRLQQGQRAAMMNLLRNNSCLSKMKNSMASMSQQLKAKLDFFKTSIQIDLEKYREQTEFGITSDKLLLAWREMEQAVELCGRENEVKHLVERMMALQTDIVDLQRSPMGRKQGGTLDDLEEQARELYRRLREKPRDQRTDGDSQEMVRLLLQAIQGFEKKVRVIYTQLSKTVVCKQKALELLPKVEEVVSLMSEDEKMVVRLQEKRQKELWNLLKIACSKVRGPVSGSPDSMNASRLSHPCQLMSQPCTAPDSLPEAAEKSEDLVAEAHTLCTQLENALQDTMKEQDQSLRSLDWSWLQSEEEEQQSLERAS</sequence>
<evidence type="ECO:0000250" key="1"/>
<evidence type="ECO:0000250" key="2">
    <source>
        <dbReference type="UniProtKB" id="O14920"/>
    </source>
</evidence>
<evidence type="ECO:0000250" key="3">
    <source>
        <dbReference type="UniProtKB" id="O88351"/>
    </source>
</evidence>
<evidence type="ECO:0000250" key="4">
    <source>
        <dbReference type="UniProtKB" id="Q9QY78"/>
    </source>
</evidence>
<evidence type="ECO:0000255" key="5">
    <source>
        <dbReference type="PROSITE-ProRule" id="PRU00159"/>
    </source>
</evidence>
<evidence type="ECO:0000255" key="6">
    <source>
        <dbReference type="PROSITE-ProRule" id="PRU10027"/>
    </source>
</evidence>
<proteinExistence type="evidence at transcript level"/>
<keyword id="KW-0067">ATP-binding</keyword>
<keyword id="KW-0963">Cytoplasm</keyword>
<keyword id="KW-0379">Hydroxylation</keyword>
<keyword id="KW-1017">Isopeptide bond</keyword>
<keyword id="KW-0418">Kinase</keyword>
<keyword id="KW-0472">Membrane</keyword>
<keyword id="KW-0547">Nucleotide-binding</keyword>
<keyword id="KW-0539">Nucleus</keyword>
<keyword id="KW-0597">Phosphoprotein</keyword>
<keyword id="KW-1185">Reference proteome</keyword>
<keyword id="KW-0702">S-nitrosylation</keyword>
<keyword id="KW-0723">Serine/threonine-protein kinase</keyword>
<keyword id="KW-0808">Transferase</keyword>
<keyword id="KW-0832">Ubl conjugation</keyword>
<gene>
    <name type="primary">IKBKB</name>
</gene>
<comment type="function">
    <text evidence="2 3">Serine kinase that plays an essential role in the NF-kappa-B signaling pathway which is activated by multiple stimuli such as inflammatory cytokines, bacterial or viral products, DNA damages or other cellular stresses. Acts as a part of the canonical IKK complex in the conventional pathway of NF-kappa-B activation. Phosphorylates inhibitors of NF-kappa-B on 2 critical serine residues. These modifications allow polyubiquitination of the inhibitors and subsequent degradation by the proteasome. In turn, free NF-kappa-B is translocated into the nucleus and activates the transcription of hundreds of genes involved in immune response, growth control, or protection against apoptosis. In addition to the NF-kappa-B inhibitors, phosphorylates several other components of the signaling pathway including NEMO/IKBKG, NF-kappa-B subunits RELA and NFKB1, as well as IKK-related kinases TBK1 and IKBKE. IKK-related kinase phosphorylations may prevent the overproduction of inflammatory mediators since they exert a negative regulation on canonical IKKs. Phosphorylates FOXO3, mediating the TNF-dependent inactivation of this pro-apoptotic transcription factor. Also phosphorylates other substrates including NAA10, NCOA3, BCL10 and IRS1 (By similarity). Phosphorylates RIPK1 at 'Ser-25' which represses its kinase activity and consequently prevents TNF-mediated RIPK1-dependent cell death (By similarity). Phosphorylates the C-terminus of IRF5, stimulating IRF5 homodimerization and translocation into the nucleus (By similarity).</text>
</comment>
<comment type="catalytic activity">
    <reaction evidence="2">
        <text>L-seryl-[I-kappa-B protein] + ATP = O-phospho-L-seryl-[I-kappa-B protein] + ADP + H(+)</text>
        <dbReference type="Rhea" id="RHEA:19073"/>
        <dbReference type="Rhea" id="RHEA-COMP:13698"/>
        <dbReference type="Rhea" id="RHEA-COMP:13699"/>
        <dbReference type="ChEBI" id="CHEBI:15378"/>
        <dbReference type="ChEBI" id="CHEBI:29999"/>
        <dbReference type="ChEBI" id="CHEBI:30616"/>
        <dbReference type="ChEBI" id="CHEBI:83421"/>
        <dbReference type="ChEBI" id="CHEBI:456216"/>
        <dbReference type="EC" id="2.7.11.10"/>
    </reaction>
</comment>
<comment type="catalytic activity">
    <reaction evidence="2">
        <text>L-seryl-[protein] + ATP = O-phospho-L-seryl-[protein] + ADP + H(+)</text>
        <dbReference type="Rhea" id="RHEA:17989"/>
        <dbReference type="Rhea" id="RHEA-COMP:9863"/>
        <dbReference type="Rhea" id="RHEA-COMP:11604"/>
        <dbReference type="ChEBI" id="CHEBI:15378"/>
        <dbReference type="ChEBI" id="CHEBI:29999"/>
        <dbReference type="ChEBI" id="CHEBI:30616"/>
        <dbReference type="ChEBI" id="CHEBI:83421"/>
        <dbReference type="ChEBI" id="CHEBI:456216"/>
        <dbReference type="EC" id="2.7.11.1"/>
    </reaction>
</comment>
<comment type="catalytic activity">
    <reaction evidence="2">
        <text>L-threonyl-[protein] + ATP = O-phospho-L-threonyl-[protein] + ADP + H(+)</text>
        <dbReference type="Rhea" id="RHEA:46608"/>
        <dbReference type="Rhea" id="RHEA-COMP:11060"/>
        <dbReference type="Rhea" id="RHEA-COMP:11605"/>
        <dbReference type="ChEBI" id="CHEBI:15378"/>
        <dbReference type="ChEBI" id="CHEBI:30013"/>
        <dbReference type="ChEBI" id="CHEBI:30616"/>
        <dbReference type="ChEBI" id="CHEBI:61977"/>
        <dbReference type="ChEBI" id="CHEBI:456216"/>
        <dbReference type="EC" id="2.7.11.1"/>
    </reaction>
</comment>
<comment type="subunit">
    <text evidence="2 3 4">Component of the I-kappa-B-kinase (IKK) core complex consisting of CHUK, IKBKB and IKBKG; probably four alpha/CHUK-beta/IKBKB dimers are associated with four gamma/IKBKG subunits. The IKK core complex seems to associate with regulatory or adapter proteins to form a IKK-signalosome holo-complex. The IKK complex associates with TERF2IP/RAP1, leading to promote IKK-mediated phosphorylation of RELA/p65. Part of a complex composed of NCOA2, NCOA3, CHUK/IKKA, IKBKB, IKBKG and CREBBP. Part of a 70-90 kDa complex at least consisting of CHUK/IKKA, IKBKB, NFKBIA, RELA, ELP1 and MAP3K14. Found in a membrane raft complex, at least composed of BCL10, CARD11, DPP4 and IKBKB. Interacts with SQSTM1 through PRKCZ or PRKCI. Forms an NGF-induced complex with IKBKB, PRKCI and TRAF6. May interact with MAVS/IPS1. Interacts with NALP2. Interacts with TICAM1. Interacts with FAF1; the interaction disrupts the IKK complex formation. Interacts with ATM. Part of a ternary complex consisting of TANK, IKBKB and IKBKG. Interacts with NIBP; the interaction is direct. Interacts with ARRB1 and ARRB2. Interacts with TRIM21. Interacts with NLRC5; prevents IKBKB phosphorylation and kinase activity. Interacts with PDPK1. Interacts with EIF2AK2/PKR. The phosphorylated form interacts with PPM1A and PPM1B. Interacts with ZNF268; the interaction is further increased in a TNF-alpha-dependent manner. Interacts with IKBKE. Interacts with ZC3H12A. Interacts with AKAP13 (By similarity). Interacts with IFIT5; the interaction synergizes the recruitment of IKK to MAP3K7 and enhances IKK phosphorylation (By similarity). Interacts with LRRC14; disrupts IKBKB-IKBKG interaction preventing I-kappa-B-kinase (IKK) core complex formation and leading to a decrease of IKBKB phosphorylation and NF-kappaB activation (By similarity). Interacts with SASH1 (By similarity). Interacts with ARFIP2 (By similarity). Interacts with FKBP5 (By similarity).</text>
</comment>
<comment type="subcellular location">
    <subcellularLocation>
        <location evidence="2">Cytoplasm</location>
    </subcellularLocation>
    <subcellularLocation>
        <location evidence="2">Nucleus</location>
    </subcellularLocation>
    <subcellularLocation>
        <location evidence="2">Membrane raft</location>
    </subcellularLocation>
    <text evidence="2">Colocalized with DPP4 in membrane rafts.</text>
</comment>
<comment type="domain">
    <text evidence="2">The kinase domain is located in the N-terminal region. The leucine zipper is important to allow homo- and hetero-dimerization. At the C-terminal region is located the region responsible for the interaction with NEMO/IKBKG.</text>
</comment>
<comment type="PTM">
    <text evidence="2">Upon cytokine stimulation, phosphorylated on Ser-177 and Ser-181 by MEKK1 and/or MAP3K14/NIK as well as TBK1 and PRKCZ; which enhances activity. Phosphorylated by MAP3K7/TAK1 in response to NOD1 and NOD2 signaling, promoting activation and phosphorylation of NF-kappa-B inhibitors, leading to NF-kappa-B activation. Once activated, autophosphorylates on the C-terminal serine cluster; which decreases activity and prevents prolonged activation of the inflammatory response. Phosphorylated by the IKK-related kinases TBK1 and IKBKE, which is associated with reduced CHUK/IKKA and IKBKB activity and NF-kappa-B-dependent gene transcription. Dephosphorylated at Ser-177 and Ser-181 by PPM1A and PPM1B.</text>
</comment>
<comment type="PTM">
    <text evidence="2">Ubiquitinated. Monoubiquitination involves TRIM21 that leads to inhibition of Tax-induced NF-kappa-B signaling. 'Ser-163' may not serve as a monoubiquitination site. Ubiquitination on 'Ser-163' may modulate phosphorylation on C-terminal serine residues.</text>
</comment>
<comment type="PTM">
    <text evidence="2">Hydroxylated by PHD1/EGLN2, loss of hydroxylation under hypoxic conditions results in activation of NF-kappa-B.</text>
</comment>
<comment type="similarity">
    <text evidence="5">Belongs to the protein kinase superfamily. Ser/Thr protein kinase family. I-kappa-B kinase subfamily.</text>
</comment>
<feature type="chain" id="PRO_0000248284" description="Inhibitor of nuclear factor kappa-B kinase subunit beta">
    <location>
        <begin position="1"/>
        <end position="756"/>
    </location>
</feature>
<feature type="domain" description="Protein kinase" evidence="5">
    <location>
        <begin position="15"/>
        <end position="300"/>
    </location>
</feature>
<feature type="region of interest" description="Leucine-zipper">
    <location>
        <begin position="458"/>
        <end position="479"/>
    </location>
</feature>
<feature type="region of interest" description="NEMO-binding" evidence="2">
    <location>
        <begin position="737"/>
        <end position="742"/>
    </location>
</feature>
<feature type="active site" description="Proton acceptor" evidence="5 6">
    <location>
        <position position="145"/>
    </location>
</feature>
<feature type="binding site" evidence="5">
    <location>
        <begin position="21"/>
        <end position="29"/>
    </location>
    <ligand>
        <name>ATP</name>
        <dbReference type="ChEBI" id="CHEBI:30616"/>
    </ligand>
</feature>
<feature type="binding site" evidence="5">
    <location>
        <position position="44"/>
    </location>
    <ligand>
        <name>ATP</name>
        <dbReference type="ChEBI" id="CHEBI:30616"/>
    </ligand>
</feature>
<feature type="modified residue" description="Phosphoserine; by TBK1 and PKC/PRKCZ" evidence="2">
    <location>
        <position position="177"/>
    </location>
</feature>
<feature type="modified residue" description="S-nitrosocysteine" evidence="2">
    <location>
        <position position="179"/>
    </location>
</feature>
<feature type="modified residue" description="Phosphoserine; by TBK1, PKC/PRKCZ and PDPK1" evidence="2">
    <location>
        <position position="181"/>
    </location>
</feature>
<feature type="modified residue" description="Hydroxyproline" evidence="1">
    <location>
        <position position="191"/>
    </location>
</feature>
<feature type="modified residue" description="Phosphoserine; by autocatalysis" evidence="2">
    <location>
        <position position="670"/>
    </location>
</feature>
<feature type="modified residue" description="Phosphoserine; by autocatalysis" evidence="2">
    <location>
        <position position="672"/>
    </location>
</feature>
<feature type="modified residue" description="Phosphoserine; by autocatalysis" evidence="2">
    <location>
        <position position="675"/>
    </location>
</feature>
<feature type="modified residue" description="Phosphoserine; by autocatalysis" evidence="2">
    <location>
        <position position="682"/>
    </location>
</feature>
<feature type="modified residue" description="Phosphoserine; by autocatalysis" evidence="2">
    <location>
        <position position="689"/>
    </location>
</feature>
<feature type="modified residue" description="Phosphoserine; by autocatalysis" evidence="2">
    <location>
        <position position="697"/>
    </location>
</feature>
<feature type="modified residue" description="Phosphoserine; by autocatalysis" evidence="2">
    <location>
        <position position="705"/>
    </location>
</feature>
<feature type="modified residue" description="Phosphoserine; by autocatalysis" evidence="2">
    <location>
        <position position="733"/>
    </location>
</feature>
<feature type="modified residue" description="Phosphoserine; by autocatalysis" evidence="2">
    <location>
        <position position="740"/>
    </location>
</feature>
<feature type="cross-link" description="Glycyl lysine isopeptide (Lys-Gly) (interchain with G-Cter in ubiquitin)" evidence="2">
    <location>
        <position position="163"/>
    </location>
</feature>
<dbReference type="EC" id="2.7.11.10"/>
<dbReference type="EC" id="2.7.11.1" evidence="2"/>
<dbReference type="EMBL" id="AJ414556">
    <property type="protein sequence ID" value="CAC93687.1"/>
    <property type="molecule type" value="mRNA"/>
</dbReference>
<dbReference type="EMBL" id="BT021585">
    <property type="protein sequence ID" value="AAX46432.1"/>
    <property type="molecule type" value="mRNA"/>
</dbReference>
<dbReference type="RefSeq" id="NP_776778.1">
    <property type="nucleotide sequence ID" value="NM_174353.2"/>
</dbReference>
<dbReference type="SMR" id="Q95KV0"/>
<dbReference type="BioGRID" id="159165">
    <property type="interactions" value="2"/>
</dbReference>
<dbReference type="FunCoup" id="Q95KV0">
    <property type="interactions" value="2097"/>
</dbReference>
<dbReference type="STRING" id="9913.ENSBTAP00000074208"/>
<dbReference type="PaxDb" id="9913-ENSBTAP00000009995"/>
<dbReference type="GeneID" id="281854"/>
<dbReference type="KEGG" id="bta:281854"/>
<dbReference type="CTD" id="3551"/>
<dbReference type="VEuPathDB" id="HostDB:ENSBTAG00000007599"/>
<dbReference type="eggNOG" id="KOG4250">
    <property type="taxonomic scope" value="Eukaryota"/>
</dbReference>
<dbReference type="HOGENOM" id="CLU_000288_101_2_1"/>
<dbReference type="InParanoid" id="Q95KV0"/>
<dbReference type="OMA" id="FMSLDWS"/>
<dbReference type="OrthoDB" id="267381at2759"/>
<dbReference type="TreeFam" id="TF324269"/>
<dbReference type="Reactome" id="R-BTA-1169091">
    <property type="pathway name" value="Activation of NF-kappaB in B cells"/>
</dbReference>
<dbReference type="Reactome" id="R-BTA-1810476">
    <property type="pathway name" value="RIP-mediated NFkB activation via ZBP1"/>
</dbReference>
<dbReference type="Reactome" id="R-BTA-202424">
    <property type="pathway name" value="Downstream TCR signaling"/>
</dbReference>
<dbReference type="Reactome" id="R-BTA-209543">
    <property type="pathway name" value="p75NTR recruits signalling complexes"/>
</dbReference>
<dbReference type="Reactome" id="R-BTA-209560">
    <property type="pathway name" value="NF-kB is activated and signals survival"/>
</dbReference>
<dbReference type="Reactome" id="R-BTA-2871837">
    <property type="pathway name" value="FCERI mediated NF-kB activation"/>
</dbReference>
<dbReference type="Reactome" id="R-BTA-445989">
    <property type="pathway name" value="TAK1-dependent IKK and NF-kappa-B activation"/>
</dbReference>
<dbReference type="Reactome" id="R-BTA-5357905">
    <property type="pathway name" value="Regulation of TNFR1 signaling"/>
</dbReference>
<dbReference type="Reactome" id="R-BTA-5357956">
    <property type="pathway name" value="TNFR1-induced NF-kappa-B signaling pathway"/>
</dbReference>
<dbReference type="Reactome" id="R-BTA-5607764">
    <property type="pathway name" value="CLEC7A (Dectin-1) signaling"/>
</dbReference>
<dbReference type="Reactome" id="R-BTA-5684264">
    <property type="pathway name" value="MAP3K8 (TPL2)-dependent MAPK1/3 activation"/>
</dbReference>
<dbReference type="Reactome" id="R-BTA-9020702">
    <property type="pathway name" value="Interleukin-1 signaling"/>
</dbReference>
<dbReference type="Reactome" id="R-BTA-933542">
    <property type="pathway name" value="TRAF6 mediated NF-kB activation"/>
</dbReference>
<dbReference type="Reactome" id="R-BTA-937039">
    <property type="pathway name" value="IRAK1 recruits IKK complex"/>
</dbReference>
<dbReference type="Reactome" id="R-BTA-937041">
    <property type="pathway name" value="IKK complex recruitment mediated by RIP1"/>
</dbReference>
<dbReference type="Reactome" id="R-BTA-975144">
    <property type="pathway name" value="IRAK1 recruits IKK complex upon TLR7/8 or 9 stimulation"/>
</dbReference>
<dbReference type="Reactome" id="R-BTA-9758274">
    <property type="pathway name" value="Regulation of NF-kappa B signaling"/>
</dbReference>
<dbReference type="Reactome" id="R-BTA-9833482">
    <property type="pathway name" value="PKR-mediated signaling"/>
</dbReference>
<dbReference type="Reactome" id="R-BTA-9860276">
    <property type="pathway name" value="SLC15A4:TASL-dependent IRF5 activation"/>
</dbReference>
<dbReference type="Reactome" id="R-BTA-9860927">
    <property type="pathway name" value="Turbulent (oscillatory, disturbed) flow shear stress activates signaling by PIEZO1 and integrins in endothelial cells"/>
</dbReference>
<dbReference type="Reactome" id="R-BTA-9909505">
    <property type="pathway name" value="Modulation of host responses by IFN-stimulated genes"/>
</dbReference>
<dbReference type="Proteomes" id="UP000009136">
    <property type="component" value="Chromosome 27"/>
</dbReference>
<dbReference type="Bgee" id="ENSBTAG00000007599">
    <property type="expression patterns" value="Expressed in monocyte and 105 other cell types or tissues"/>
</dbReference>
<dbReference type="GO" id="GO:0005737">
    <property type="term" value="C:cytoplasm"/>
    <property type="evidence" value="ECO:0000318"/>
    <property type="project" value="GO_Central"/>
</dbReference>
<dbReference type="GO" id="GO:0008385">
    <property type="term" value="C:IkappaB kinase complex"/>
    <property type="evidence" value="ECO:0000318"/>
    <property type="project" value="GO_Central"/>
</dbReference>
<dbReference type="GO" id="GO:0045121">
    <property type="term" value="C:membrane raft"/>
    <property type="evidence" value="ECO:0007669"/>
    <property type="project" value="UniProtKB-SubCell"/>
</dbReference>
<dbReference type="GO" id="GO:0005634">
    <property type="term" value="C:nucleus"/>
    <property type="evidence" value="ECO:0007669"/>
    <property type="project" value="UniProtKB-SubCell"/>
</dbReference>
<dbReference type="GO" id="GO:0005524">
    <property type="term" value="F:ATP binding"/>
    <property type="evidence" value="ECO:0007669"/>
    <property type="project" value="UniProtKB-KW"/>
</dbReference>
<dbReference type="GO" id="GO:0008384">
    <property type="term" value="F:IkappaB kinase activity"/>
    <property type="evidence" value="ECO:0007669"/>
    <property type="project" value="UniProtKB-EC"/>
</dbReference>
<dbReference type="GO" id="GO:0046982">
    <property type="term" value="F:protein heterodimerization activity"/>
    <property type="evidence" value="ECO:0000250"/>
    <property type="project" value="UniProtKB"/>
</dbReference>
<dbReference type="GO" id="GO:0042803">
    <property type="term" value="F:protein homodimerization activity"/>
    <property type="evidence" value="ECO:0000250"/>
    <property type="project" value="UniProtKB"/>
</dbReference>
<dbReference type="GO" id="GO:0004672">
    <property type="term" value="F:protein kinase activity"/>
    <property type="evidence" value="ECO:0000250"/>
    <property type="project" value="UniProtKB"/>
</dbReference>
<dbReference type="GO" id="GO:0106310">
    <property type="term" value="F:protein serine kinase activity"/>
    <property type="evidence" value="ECO:0007669"/>
    <property type="project" value="RHEA"/>
</dbReference>
<dbReference type="GO" id="GO:0004674">
    <property type="term" value="F:protein serine/threonine kinase activity"/>
    <property type="evidence" value="ECO:0000250"/>
    <property type="project" value="UniProtKB"/>
</dbReference>
<dbReference type="GO" id="GO:0071356">
    <property type="term" value="P:cellular response to tumor necrosis factor"/>
    <property type="evidence" value="ECO:0000250"/>
    <property type="project" value="UniProtKB"/>
</dbReference>
<dbReference type="GO" id="GO:0043123">
    <property type="term" value="P:positive regulation of canonical NF-kappaB signal transduction"/>
    <property type="evidence" value="ECO:0000318"/>
    <property type="project" value="GO_Central"/>
</dbReference>
<dbReference type="GO" id="GO:0045944">
    <property type="term" value="P:positive regulation of transcription by RNA polymerase II"/>
    <property type="evidence" value="ECO:0000250"/>
    <property type="project" value="UniProtKB"/>
</dbReference>
<dbReference type="GO" id="GO:0033209">
    <property type="term" value="P:tumor necrosis factor-mediated signaling pathway"/>
    <property type="evidence" value="ECO:0000318"/>
    <property type="project" value="GO_Central"/>
</dbReference>
<dbReference type="CDD" id="cd14038">
    <property type="entry name" value="STKc_IKK_beta"/>
    <property type="match status" value="1"/>
</dbReference>
<dbReference type="CDD" id="cd17046">
    <property type="entry name" value="Ubl_IKKA_like"/>
    <property type="match status" value="1"/>
</dbReference>
<dbReference type="FunFam" id="3.10.20.90:FF:000087">
    <property type="entry name" value="Inhibitor of nuclear factor kappa B kinase subunit beta"/>
    <property type="match status" value="1"/>
</dbReference>
<dbReference type="FunFam" id="1.10.510.10:FF:000147">
    <property type="entry name" value="Inhibitor of nuclear factor kappa-B kinase subunit beta"/>
    <property type="match status" value="1"/>
</dbReference>
<dbReference type="FunFam" id="1.20.1270.250:FF:000002">
    <property type="entry name" value="Putative inhibitor of nuclear factor kappa-B kinase subunit beta"/>
    <property type="match status" value="1"/>
</dbReference>
<dbReference type="Gene3D" id="1.20.1270.250">
    <property type="match status" value="1"/>
</dbReference>
<dbReference type="Gene3D" id="6.10.250.2110">
    <property type="match status" value="1"/>
</dbReference>
<dbReference type="Gene3D" id="3.10.20.90">
    <property type="entry name" value="Phosphatidylinositol 3-kinase Catalytic Subunit, Chain A, domain 1"/>
    <property type="match status" value="1"/>
</dbReference>
<dbReference type="Gene3D" id="1.10.510.10">
    <property type="entry name" value="Transferase(Phosphotransferase) domain 1"/>
    <property type="match status" value="1"/>
</dbReference>
<dbReference type="InterPro" id="IPR041185">
    <property type="entry name" value="IKBKB_SDD"/>
</dbReference>
<dbReference type="InterPro" id="IPR046375">
    <property type="entry name" value="IKBKB_SDD_sf"/>
</dbReference>
<dbReference type="InterPro" id="IPR051180">
    <property type="entry name" value="IKK"/>
</dbReference>
<dbReference type="InterPro" id="IPR022007">
    <property type="entry name" value="IKKbetaNEMObind"/>
</dbReference>
<dbReference type="InterPro" id="IPR011009">
    <property type="entry name" value="Kinase-like_dom_sf"/>
</dbReference>
<dbReference type="InterPro" id="IPR000719">
    <property type="entry name" value="Prot_kinase_dom"/>
</dbReference>
<dbReference type="InterPro" id="IPR008271">
    <property type="entry name" value="Ser/Thr_kinase_AS"/>
</dbReference>
<dbReference type="InterPro" id="IPR029071">
    <property type="entry name" value="Ubiquitin-like_domsf"/>
</dbReference>
<dbReference type="PANTHER" id="PTHR22969">
    <property type="entry name" value="IKB KINASE"/>
    <property type="match status" value="1"/>
</dbReference>
<dbReference type="PANTHER" id="PTHR22969:SF7">
    <property type="entry name" value="INHIBITOR OF NUCLEAR FACTOR KAPPA-B KINASE SUBUNIT BETA"/>
    <property type="match status" value="1"/>
</dbReference>
<dbReference type="Pfam" id="PF18397">
    <property type="entry name" value="IKBKB_SDD"/>
    <property type="match status" value="1"/>
</dbReference>
<dbReference type="Pfam" id="PF12179">
    <property type="entry name" value="IKKbetaNEMObind"/>
    <property type="match status" value="1"/>
</dbReference>
<dbReference type="Pfam" id="PF00069">
    <property type="entry name" value="Pkinase"/>
    <property type="match status" value="1"/>
</dbReference>
<dbReference type="SMART" id="SM01239">
    <property type="entry name" value="IKKbetaNEMObind"/>
    <property type="match status" value="1"/>
</dbReference>
<dbReference type="SMART" id="SM00220">
    <property type="entry name" value="S_TKc"/>
    <property type="match status" value="1"/>
</dbReference>
<dbReference type="SUPFAM" id="SSF56112">
    <property type="entry name" value="Protein kinase-like (PK-like)"/>
    <property type="match status" value="1"/>
</dbReference>
<dbReference type="SUPFAM" id="SSF54236">
    <property type="entry name" value="Ubiquitin-like"/>
    <property type="match status" value="1"/>
</dbReference>
<dbReference type="PROSITE" id="PS50011">
    <property type="entry name" value="PROTEIN_KINASE_DOM"/>
    <property type="match status" value="1"/>
</dbReference>
<dbReference type="PROSITE" id="PS00108">
    <property type="entry name" value="PROTEIN_KINASE_ST"/>
    <property type="match status" value="1"/>
</dbReference>
<reference key="1">
    <citation type="journal article" date="2002" name="Gene">
        <title>Characterization of the bovine IkappaB kinases (IKK)alpha and IKKbeta, the regulatory subunit NEMO and their substrate IkappaBalpha.</title>
        <authorList>
            <person name="Rottenberg S."/>
            <person name="Schmuckli-Maurer J."/>
            <person name="Grimm S."/>
            <person name="Heussler V.T."/>
            <person name="Dobbelaere D.A.E."/>
        </authorList>
    </citation>
    <scope>NUCLEOTIDE SEQUENCE [MRNA]</scope>
</reference>
<reference key="2">
    <citation type="journal article" date="2005" name="BMC Genomics">
        <title>Characterization of 954 bovine full-CDS cDNA sequences.</title>
        <authorList>
            <person name="Harhay G.P."/>
            <person name="Sonstegard T.S."/>
            <person name="Keele J.W."/>
            <person name="Heaton M.P."/>
            <person name="Clawson M.L."/>
            <person name="Snelling W.M."/>
            <person name="Wiedmann R.T."/>
            <person name="Van Tassell C.P."/>
            <person name="Smith T.P.L."/>
        </authorList>
    </citation>
    <scope>NUCLEOTIDE SEQUENCE [LARGE SCALE MRNA]</scope>
</reference>
<protein>
    <recommendedName>
        <fullName>Inhibitor of nuclear factor kappa-B kinase subunit beta</fullName>
        <shortName>I-kappa-B-kinase beta</shortName>
        <shortName>IKK-B</shortName>
        <shortName>IKK-beta</shortName>
        <shortName>IkBKB</shortName>
        <ecNumber>2.7.11.10</ecNumber>
    </recommendedName>
    <alternativeName>
        <fullName>I-kappa-B kinase 2</fullName>
        <shortName>IKK2</shortName>
    </alternativeName>
    <alternativeName>
        <fullName>Nuclear factor NF-kappa-B inhibitor kinase beta</fullName>
        <shortName>NFKBIKB</shortName>
    </alternativeName>
    <alternativeName>
        <fullName>Serine/threonine protein kinase IKBKB</fullName>
        <ecNumber evidence="2">2.7.11.1</ecNumber>
    </alternativeName>
</protein>